<keyword id="KW-0963">Cytoplasm</keyword>
<keyword id="KW-0489">Methyltransferase</keyword>
<keyword id="KW-1185">Reference proteome</keyword>
<keyword id="KW-0698">rRNA processing</keyword>
<keyword id="KW-0949">S-adenosyl-L-methionine</keyword>
<keyword id="KW-0808">Transferase</keyword>
<comment type="function">
    <text evidence="1">Specifically methylates the uridine in position 2552 of 23S rRNA at the 2'-O position of the ribose in the fully assembled 50S ribosomal subunit.</text>
</comment>
<comment type="catalytic activity">
    <reaction evidence="1">
        <text>uridine(2552) in 23S rRNA + S-adenosyl-L-methionine = 2'-O-methyluridine(2552) in 23S rRNA + S-adenosyl-L-homocysteine + H(+)</text>
        <dbReference type="Rhea" id="RHEA:42720"/>
        <dbReference type="Rhea" id="RHEA-COMP:10202"/>
        <dbReference type="Rhea" id="RHEA-COMP:10203"/>
        <dbReference type="ChEBI" id="CHEBI:15378"/>
        <dbReference type="ChEBI" id="CHEBI:57856"/>
        <dbReference type="ChEBI" id="CHEBI:59789"/>
        <dbReference type="ChEBI" id="CHEBI:65315"/>
        <dbReference type="ChEBI" id="CHEBI:74478"/>
        <dbReference type="EC" id="2.1.1.166"/>
    </reaction>
</comment>
<comment type="subcellular location">
    <subcellularLocation>
        <location evidence="1">Cytoplasm</location>
    </subcellularLocation>
</comment>
<comment type="similarity">
    <text evidence="1">Belongs to the class I-like SAM-binding methyltransferase superfamily. RNA methyltransferase RlmE family.</text>
</comment>
<protein>
    <recommendedName>
        <fullName evidence="1">Ribosomal RNA large subunit methyltransferase E</fullName>
        <ecNumber evidence="1">2.1.1.166</ecNumber>
    </recommendedName>
    <alternativeName>
        <fullName evidence="1">23S rRNA Um2552 methyltransferase</fullName>
    </alternativeName>
    <alternativeName>
        <fullName evidence="1">rRNA (uridine-2'-O-)-methyltransferase</fullName>
    </alternativeName>
</protein>
<sequence length="209" mass="23096">MSGKKRTASSSRWMQEHFDDHYVKLSQKRGLRSRAAFKIEEIQEKDKLIRPGMTVVDLGAAPGGWSQIAVKLAGDKGKVIACDILPMDPIVGVDFLQGDFREEKVLDALLTRVGDAKVDVVLSDMAPNMSGTGGVDQPRAMYLVELALDMCHQVLAPNGSFAVKVFQGEGFDEYMKAVKEAFKTVKTRKPDSSRPRSREVYLVATGYKL</sequence>
<proteinExistence type="inferred from homology"/>
<dbReference type="EC" id="2.1.1.166" evidence="1"/>
<dbReference type="EMBL" id="CP000851">
    <property type="protein sequence ID" value="ABV88385.1"/>
    <property type="molecule type" value="Genomic_DNA"/>
</dbReference>
<dbReference type="RefSeq" id="WP_012156289.1">
    <property type="nucleotide sequence ID" value="NC_009901.1"/>
</dbReference>
<dbReference type="SMR" id="A8H748"/>
<dbReference type="STRING" id="398579.Spea_3068"/>
<dbReference type="KEGG" id="spl:Spea_3068"/>
<dbReference type="eggNOG" id="COG0293">
    <property type="taxonomic scope" value="Bacteria"/>
</dbReference>
<dbReference type="HOGENOM" id="CLU_009422_4_0_6"/>
<dbReference type="OrthoDB" id="9790080at2"/>
<dbReference type="Proteomes" id="UP000002608">
    <property type="component" value="Chromosome"/>
</dbReference>
<dbReference type="GO" id="GO:0005737">
    <property type="term" value="C:cytoplasm"/>
    <property type="evidence" value="ECO:0007669"/>
    <property type="project" value="UniProtKB-SubCell"/>
</dbReference>
<dbReference type="GO" id="GO:0008650">
    <property type="term" value="F:rRNA (uridine-2'-O-)-methyltransferase activity"/>
    <property type="evidence" value="ECO:0007669"/>
    <property type="project" value="UniProtKB-UniRule"/>
</dbReference>
<dbReference type="CDD" id="cd02440">
    <property type="entry name" value="AdoMet_MTases"/>
    <property type="match status" value="1"/>
</dbReference>
<dbReference type="FunFam" id="3.40.50.150:FF:000005">
    <property type="entry name" value="Ribosomal RNA large subunit methyltransferase E"/>
    <property type="match status" value="1"/>
</dbReference>
<dbReference type="Gene3D" id="3.40.50.150">
    <property type="entry name" value="Vaccinia Virus protein VP39"/>
    <property type="match status" value="1"/>
</dbReference>
<dbReference type="HAMAP" id="MF_01547">
    <property type="entry name" value="RNA_methyltr_E"/>
    <property type="match status" value="1"/>
</dbReference>
<dbReference type="InterPro" id="IPR050082">
    <property type="entry name" value="RNA_methyltr_RlmE"/>
</dbReference>
<dbReference type="InterPro" id="IPR002877">
    <property type="entry name" value="RNA_MeTrfase_FtsJ_dom"/>
</dbReference>
<dbReference type="InterPro" id="IPR015507">
    <property type="entry name" value="rRNA-MeTfrase_E"/>
</dbReference>
<dbReference type="InterPro" id="IPR029063">
    <property type="entry name" value="SAM-dependent_MTases_sf"/>
</dbReference>
<dbReference type="NCBIfam" id="NF008390">
    <property type="entry name" value="PRK11188.1"/>
    <property type="match status" value="1"/>
</dbReference>
<dbReference type="PANTHER" id="PTHR10920">
    <property type="entry name" value="RIBOSOMAL RNA METHYLTRANSFERASE"/>
    <property type="match status" value="1"/>
</dbReference>
<dbReference type="PANTHER" id="PTHR10920:SF18">
    <property type="entry name" value="RRNA METHYLTRANSFERASE 2, MITOCHONDRIAL"/>
    <property type="match status" value="1"/>
</dbReference>
<dbReference type="Pfam" id="PF01728">
    <property type="entry name" value="FtsJ"/>
    <property type="match status" value="1"/>
</dbReference>
<dbReference type="PIRSF" id="PIRSF005461">
    <property type="entry name" value="23S_rRNA_mtase"/>
    <property type="match status" value="1"/>
</dbReference>
<dbReference type="SUPFAM" id="SSF53335">
    <property type="entry name" value="S-adenosyl-L-methionine-dependent methyltransferases"/>
    <property type="match status" value="1"/>
</dbReference>
<evidence type="ECO:0000255" key="1">
    <source>
        <dbReference type="HAMAP-Rule" id="MF_01547"/>
    </source>
</evidence>
<reference key="1">
    <citation type="submission" date="2007-10" db="EMBL/GenBank/DDBJ databases">
        <title>Complete sequence of Shewanella pealeana ATCC 700345.</title>
        <authorList>
            <consortium name="US DOE Joint Genome Institute"/>
            <person name="Copeland A."/>
            <person name="Lucas S."/>
            <person name="Lapidus A."/>
            <person name="Barry K."/>
            <person name="Glavina del Rio T."/>
            <person name="Dalin E."/>
            <person name="Tice H."/>
            <person name="Pitluck S."/>
            <person name="Chertkov O."/>
            <person name="Brettin T."/>
            <person name="Bruce D."/>
            <person name="Detter J.C."/>
            <person name="Han C."/>
            <person name="Schmutz J."/>
            <person name="Larimer F."/>
            <person name="Land M."/>
            <person name="Hauser L."/>
            <person name="Kyrpides N."/>
            <person name="Kim E."/>
            <person name="Zhao J.-S.Z."/>
            <person name="Manno D."/>
            <person name="Hawari J."/>
            <person name="Richardson P."/>
        </authorList>
    </citation>
    <scope>NUCLEOTIDE SEQUENCE [LARGE SCALE GENOMIC DNA]</scope>
    <source>
        <strain>ATCC 700345 / ANG-SQ1</strain>
    </source>
</reference>
<name>RLME_SHEPA</name>
<accession>A8H748</accession>
<organism>
    <name type="scientific">Shewanella pealeana (strain ATCC 700345 / ANG-SQ1)</name>
    <dbReference type="NCBI Taxonomy" id="398579"/>
    <lineage>
        <taxon>Bacteria</taxon>
        <taxon>Pseudomonadati</taxon>
        <taxon>Pseudomonadota</taxon>
        <taxon>Gammaproteobacteria</taxon>
        <taxon>Alteromonadales</taxon>
        <taxon>Shewanellaceae</taxon>
        <taxon>Shewanella</taxon>
    </lineage>
</organism>
<gene>
    <name evidence="1" type="primary">rlmE</name>
    <name evidence="1" type="synonym">ftsJ</name>
    <name evidence="1" type="synonym">rrmJ</name>
    <name type="ordered locus">Spea_3068</name>
</gene>
<feature type="chain" id="PRO_1000087716" description="Ribosomal RNA large subunit methyltransferase E">
    <location>
        <begin position="1"/>
        <end position="209"/>
    </location>
</feature>
<feature type="active site" description="Proton acceptor" evidence="1">
    <location>
        <position position="164"/>
    </location>
</feature>
<feature type="binding site" evidence="1">
    <location>
        <position position="63"/>
    </location>
    <ligand>
        <name>S-adenosyl-L-methionine</name>
        <dbReference type="ChEBI" id="CHEBI:59789"/>
    </ligand>
</feature>
<feature type="binding site" evidence="1">
    <location>
        <position position="65"/>
    </location>
    <ligand>
        <name>S-adenosyl-L-methionine</name>
        <dbReference type="ChEBI" id="CHEBI:59789"/>
    </ligand>
</feature>
<feature type="binding site" evidence="1">
    <location>
        <position position="83"/>
    </location>
    <ligand>
        <name>S-adenosyl-L-methionine</name>
        <dbReference type="ChEBI" id="CHEBI:59789"/>
    </ligand>
</feature>
<feature type="binding site" evidence="1">
    <location>
        <position position="99"/>
    </location>
    <ligand>
        <name>S-adenosyl-L-methionine</name>
        <dbReference type="ChEBI" id="CHEBI:59789"/>
    </ligand>
</feature>
<feature type="binding site" evidence="1">
    <location>
        <position position="124"/>
    </location>
    <ligand>
        <name>S-adenosyl-L-methionine</name>
        <dbReference type="ChEBI" id="CHEBI:59789"/>
    </ligand>
</feature>